<accession>Q9UHY1</accession>
<accession>B3KV40</accession>
<accession>D6W558</accession>
<accession>Q53FZ5</accession>
<accession>Q96SU3</accession>
<gene>
    <name type="primary">NRBP1</name>
    <name evidence="10" type="synonym">BCON3</name>
    <name type="synonym">NRBP</name>
</gene>
<sequence>MSEGESQTVLSSGSDPKVESSSSAPGLTSVSPPVTSTTSAASPEEEEESEDESEILEESPCGRWQKRREEVNQRNVPGIDSAYLAMDTEEGVEVVWNEVQFSERKNYKLQEEKVRAVFDNLIQLEHLNIVKFHKYWADIKENKARVIFITEYMSSGSLKQFLKKTKKNHKTMNEKAWKRWCTQILSALSYLHSCDPPIIHGNLTCDTIFIQHNGLIKIGSVAPDTINNHVKTCREEQKNLHFFAPEYGEVTNVTTAVDIYSFGMCALEMAVLEIQGNGESSYVPQEAISSAIQLLEDPLQREFIQKCLQSEPARRPTARELLFHPALFEVPSLKLLAAHCIVGHQHMIPENALEEITKNMDTSAVLAEIPAGPGREPVQTLYSQSPALELDKFLEDVRNGIYPLTAFGLPRPQQPQQEEVTSPVVPPSVKTPTPEPAEVETRKVVLMQCNIESVEEGVKHHLTLLLKLEDKLNRHLSCDLMPNENIPELAAELVQLGFISEADQSRLTSLLEETLNKFNFARNSTLNSAAVTVSS</sequence>
<name>NRBP_HUMAN</name>
<proteinExistence type="evidence at protein level"/>
<keyword id="KW-0007">Acetylation</keyword>
<keyword id="KW-0966">Cell projection</keyword>
<keyword id="KW-0963">Cytoplasm</keyword>
<keyword id="KW-0472">Membrane</keyword>
<keyword id="KW-0597">Phosphoprotein</keyword>
<keyword id="KW-1267">Proteomics identification</keyword>
<keyword id="KW-1185">Reference proteome</keyword>
<reference evidence="9 10" key="1">
    <citation type="journal article" date="2000" name="Genomics">
        <title>Cloning of the cDNA and localization of the gene encoding human NRBP, a ubiquitously expressed, multidomain putative adapter protein.</title>
        <authorList>
            <person name="Hooper J.D."/>
            <person name="Baker E."/>
            <person name="Ogbourne S.M."/>
            <person name="Sutherland G.R."/>
            <person name="Antalis T.M."/>
        </authorList>
    </citation>
    <scope>NUCLEOTIDE SEQUENCE [MRNA]</scope>
    <scope>TISSUE SPECIFICITY</scope>
</reference>
<reference evidence="13" key="2">
    <citation type="journal article" date="2004" name="Nat. Genet.">
        <title>Complete sequencing and characterization of 21,243 full-length human cDNAs.</title>
        <authorList>
            <person name="Ota T."/>
            <person name="Suzuki Y."/>
            <person name="Nishikawa T."/>
            <person name="Otsuki T."/>
            <person name="Sugiyama T."/>
            <person name="Irie R."/>
            <person name="Wakamatsu A."/>
            <person name="Hayashi K."/>
            <person name="Sato H."/>
            <person name="Nagai K."/>
            <person name="Kimura K."/>
            <person name="Makita H."/>
            <person name="Sekine M."/>
            <person name="Obayashi M."/>
            <person name="Nishi T."/>
            <person name="Shibahara T."/>
            <person name="Tanaka T."/>
            <person name="Ishii S."/>
            <person name="Yamamoto J."/>
            <person name="Saito K."/>
            <person name="Kawai Y."/>
            <person name="Isono Y."/>
            <person name="Nakamura Y."/>
            <person name="Nagahari K."/>
            <person name="Murakami K."/>
            <person name="Yasuda T."/>
            <person name="Iwayanagi T."/>
            <person name="Wagatsuma M."/>
            <person name="Shiratori A."/>
            <person name="Sudo H."/>
            <person name="Hosoiri T."/>
            <person name="Kaku Y."/>
            <person name="Kodaira H."/>
            <person name="Kondo H."/>
            <person name="Sugawara M."/>
            <person name="Takahashi M."/>
            <person name="Kanda K."/>
            <person name="Yokoi T."/>
            <person name="Furuya T."/>
            <person name="Kikkawa E."/>
            <person name="Omura Y."/>
            <person name="Abe K."/>
            <person name="Kamihara K."/>
            <person name="Katsuta N."/>
            <person name="Sato K."/>
            <person name="Tanikawa M."/>
            <person name="Yamazaki M."/>
            <person name="Ninomiya K."/>
            <person name="Ishibashi T."/>
            <person name="Yamashita H."/>
            <person name="Murakawa K."/>
            <person name="Fujimori K."/>
            <person name="Tanai H."/>
            <person name="Kimata M."/>
            <person name="Watanabe M."/>
            <person name="Hiraoka S."/>
            <person name="Chiba Y."/>
            <person name="Ishida S."/>
            <person name="Ono Y."/>
            <person name="Takiguchi S."/>
            <person name="Watanabe S."/>
            <person name="Yosida M."/>
            <person name="Hotuta T."/>
            <person name="Kusano J."/>
            <person name="Kanehori K."/>
            <person name="Takahashi-Fujii A."/>
            <person name="Hara H."/>
            <person name="Tanase T.-O."/>
            <person name="Nomura Y."/>
            <person name="Togiya S."/>
            <person name="Komai F."/>
            <person name="Hara R."/>
            <person name="Takeuchi K."/>
            <person name="Arita M."/>
            <person name="Imose N."/>
            <person name="Musashino K."/>
            <person name="Yuuki H."/>
            <person name="Oshima A."/>
            <person name="Sasaki N."/>
            <person name="Aotsuka S."/>
            <person name="Yoshikawa Y."/>
            <person name="Matsunawa H."/>
            <person name="Ichihara T."/>
            <person name="Shiohata N."/>
            <person name="Sano S."/>
            <person name="Moriya S."/>
            <person name="Momiyama H."/>
            <person name="Satoh N."/>
            <person name="Takami S."/>
            <person name="Terashima Y."/>
            <person name="Suzuki O."/>
            <person name="Nakagawa S."/>
            <person name="Senoh A."/>
            <person name="Mizoguchi H."/>
            <person name="Goto Y."/>
            <person name="Shimizu F."/>
            <person name="Wakebe H."/>
            <person name="Hishigaki H."/>
            <person name="Watanabe T."/>
            <person name="Sugiyama A."/>
            <person name="Takemoto M."/>
            <person name="Kawakami B."/>
            <person name="Yamazaki M."/>
            <person name="Watanabe K."/>
            <person name="Kumagai A."/>
            <person name="Itakura S."/>
            <person name="Fukuzumi Y."/>
            <person name="Fujimori Y."/>
            <person name="Komiyama M."/>
            <person name="Tashiro H."/>
            <person name="Tanigami A."/>
            <person name="Fujiwara T."/>
            <person name="Ono T."/>
            <person name="Yamada K."/>
            <person name="Fujii Y."/>
            <person name="Ozaki K."/>
            <person name="Hirao M."/>
            <person name="Ohmori Y."/>
            <person name="Kawabata A."/>
            <person name="Hikiji T."/>
            <person name="Kobatake N."/>
            <person name="Inagaki H."/>
            <person name="Ikema Y."/>
            <person name="Okamoto S."/>
            <person name="Okitani R."/>
            <person name="Kawakami T."/>
            <person name="Noguchi S."/>
            <person name="Itoh T."/>
            <person name="Shigeta K."/>
            <person name="Senba T."/>
            <person name="Matsumura K."/>
            <person name="Nakajima Y."/>
            <person name="Mizuno T."/>
            <person name="Morinaga M."/>
            <person name="Sasaki M."/>
            <person name="Togashi T."/>
            <person name="Oyama M."/>
            <person name="Hata H."/>
            <person name="Watanabe M."/>
            <person name="Komatsu T."/>
            <person name="Mizushima-Sugano J."/>
            <person name="Satoh T."/>
            <person name="Shirai Y."/>
            <person name="Takahashi Y."/>
            <person name="Nakagawa K."/>
            <person name="Okumura K."/>
            <person name="Nagase T."/>
            <person name="Nomura N."/>
            <person name="Kikuchi H."/>
            <person name="Masuho Y."/>
            <person name="Yamashita R."/>
            <person name="Nakai K."/>
            <person name="Yada T."/>
            <person name="Nakamura Y."/>
            <person name="Ohara O."/>
            <person name="Isogai T."/>
            <person name="Sugano S."/>
        </authorList>
    </citation>
    <scope>NUCLEOTIDE SEQUENCE [LARGE SCALE MRNA]</scope>
    <source>
        <tissue evidence="14">Neuron</tissue>
        <tissue evidence="13">Placenta</tissue>
        <tissue>Testis</tissue>
    </source>
</reference>
<reference key="3">
    <citation type="journal article" date="2001" name="Genome Res.">
        <title>Towards a catalog of human genes and proteins: sequencing and analysis of 500 novel complete protein coding human cDNAs.</title>
        <authorList>
            <person name="Wiemann S."/>
            <person name="Weil B."/>
            <person name="Wellenreuther R."/>
            <person name="Gassenhuber J."/>
            <person name="Glassl S."/>
            <person name="Ansorge W."/>
            <person name="Boecher M."/>
            <person name="Bloecker H."/>
            <person name="Bauersachs S."/>
            <person name="Blum H."/>
            <person name="Lauber J."/>
            <person name="Duesterhoeft A."/>
            <person name="Beyer A."/>
            <person name="Koehrer K."/>
            <person name="Strack N."/>
            <person name="Mewes H.-W."/>
            <person name="Ottenwaelder B."/>
            <person name="Obermaier B."/>
            <person name="Tampe J."/>
            <person name="Heubner D."/>
            <person name="Wambutt R."/>
            <person name="Korn B."/>
            <person name="Klein M."/>
            <person name="Poustka A."/>
        </authorList>
    </citation>
    <scope>NUCLEOTIDE SEQUENCE [LARGE SCALE MRNA]</scope>
    <source>
        <tissue>Brain</tissue>
    </source>
</reference>
<reference evidence="16" key="4">
    <citation type="submission" date="2005-04" db="EMBL/GenBank/DDBJ databases">
        <authorList>
            <person name="Suzuki Y."/>
            <person name="Sugano S."/>
            <person name="Totoki Y."/>
            <person name="Toyoda A."/>
            <person name="Takeda T."/>
            <person name="Sakaki Y."/>
            <person name="Tanaka A."/>
            <person name="Yokoyama S."/>
        </authorList>
    </citation>
    <scope>NUCLEOTIDE SEQUENCE [LARGE SCALE MRNA]</scope>
    <source>
        <tissue evidence="15">Kidney</tissue>
    </source>
</reference>
<reference evidence="9 12" key="5">
    <citation type="journal article" date="2005" name="Nature">
        <title>Generation and annotation of the DNA sequences of human chromosomes 2 and 4.</title>
        <authorList>
            <person name="Hillier L.W."/>
            <person name="Graves T.A."/>
            <person name="Fulton R.S."/>
            <person name="Fulton L.A."/>
            <person name="Pepin K.H."/>
            <person name="Minx P."/>
            <person name="Wagner-McPherson C."/>
            <person name="Layman D."/>
            <person name="Wylie K."/>
            <person name="Sekhon M."/>
            <person name="Becker M.C."/>
            <person name="Fewell G.A."/>
            <person name="Delehaunty K.D."/>
            <person name="Miner T.L."/>
            <person name="Nash W.E."/>
            <person name="Kremitzki C."/>
            <person name="Oddy L."/>
            <person name="Du H."/>
            <person name="Sun H."/>
            <person name="Bradshaw-Cordum H."/>
            <person name="Ali J."/>
            <person name="Carter J."/>
            <person name="Cordes M."/>
            <person name="Harris A."/>
            <person name="Isak A."/>
            <person name="van Brunt A."/>
            <person name="Nguyen C."/>
            <person name="Du F."/>
            <person name="Courtney L."/>
            <person name="Kalicki J."/>
            <person name="Ozersky P."/>
            <person name="Abbott S."/>
            <person name="Armstrong J."/>
            <person name="Belter E.A."/>
            <person name="Caruso L."/>
            <person name="Cedroni M."/>
            <person name="Cotton M."/>
            <person name="Davidson T."/>
            <person name="Desai A."/>
            <person name="Elliott G."/>
            <person name="Erb T."/>
            <person name="Fronick C."/>
            <person name="Gaige T."/>
            <person name="Haakenson W."/>
            <person name="Haglund K."/>
            <person name="Holmes A."/>
            <person name="Harkins R."/>
            <person name="Kim K."/>
            <person name="Kruchowski S.S."/>
            <person name="Strong C.M."/>
            <person name="Grewal N."/>
            <person name="Goyea E."/>
            <person name="Hou S."/>
            <person name="Levy A."/>
            <person name="Martinka S."/>
            <person name="Mead K."/>
            <person name="McLellan M.D."/>
            <person name="Meyer R."/>
            <person name="Randall-Maher J."/>
            <person name="Tomlinson C."/>
            <person name="Dauphin-Kohlberg S."/>
            <person name="Kozlowicz-Reilly A."/>
            <person name="Shah N."/>
            <person name="Swearengen-Shahid S."/>
            <person name="Snider J."/>
            <person name="Strong J.T."/>
            <person name="Thompson J."/>
            <person name="Yoakum M."/>
            <person name="Leonard S."/>
            <person name="Pearman C."/>
            <person name="Trani L."/>
            <person name="Radionenko M."/>
            <person name="Waligorski J.E."/>
            <person name="Wang C."/>
            <person name="Rock S.M."/>
            <person name="Tin-Wollam A.-M."/>
            <person name="Maupin R."/>
            <person name="Latreille P."/>
            <person name="Wendl M.C."/>
            <person name="Yang S.-P."/>
            <person name="Pohl C."/>
            <person name="Wallis J.W."/>
            <person name="Spieth J."/>
            <person name="Bieri T.A."/>
            <person name="Berkowicz N."/>
            <person name="Nelson J.O."/>
            <person name="Osborne J."/>
            <person name="Ding L."/>
            <person name="Meyer R."/>
            <person name="Sabo A."/>
            <person name="Shotland Y."/>
            <person name="Sinha P."/>
            <person name="Wohldmann P.E."/>
            <person name="Cook L.L."/>
            <person name="Hickenbotham M.T."/>
            <person name="Eldred J."/>
            <person name="Williams D."/>
            <person name="Jones T.A."/>
            <person name="She X."/>
            <person name="Ciccarelli F.D."/>
            <person name="Izaurralde E."/>
            <person name="Taylor J."/>
            <person name="Schmutz J."/>
            <person name="Myers R.M."/>
            <person name="Cox D.R."/>
            <person name="Huang X."/>
            <person name="McPherson J.D."/>
            <person name="Mardis E.R."/>
            <person name="Clifton S.W."/>
            <person name="Warren W.C."/>
            <person name="Chinwalla A.T."/>
            <person name="Eddy S.R."/>
            <person name="Marra M.A."/>
            <person name="Ovcharenko I."/>
            <person name="Furey T.S."/>
            <person name="Miller W."/>
            <person name="Eichler E.E."/>
            <person name="Bork P."/>
            <person name="Suyama M."/>
            <person name="Torrents D."/>
            <person name="Waterston R.H."/>
            <person name="Wilson R.K."/>
        </authorList>
    </citation>
    <scope>NUCLEOTIDE SEQUENCE [LARGE SCALE GENOMIC DNA]</scope>
</reference>
<reference evidence="16" key="6">
    <citation type="submission" date="2005-09" db="EMBL/GenBank/DDBJ databases">
        <authorList>
            <person name="Mural R.J."/>
            <person name="Istrail S."/>
            <person name="Sutton G.G."/>
            <person name="Florea L."/>
            <person name="Halpern A.L."/>
            <person name="Mobarry C.M."/>
            <person name="Lippert R."/>
            <person name="Walenz B."/>
            <person name="Shatkay H."/>
            <person name="Dew I."/>
            <person name="Miller J.R."/>
            <person name="Flanigan M.J."/>
            <person name="Edwards N.J."/>
            <person name="Bolanos R."/>
            <person name="Fasulo D."/>
            <person name="Halldorsson B.V."/>
            <person name="Hannenhalli S."/>
            <person name="Turner R."/>
            <person name="Yooseph S."/>
            <person name="Lu F."/>
            <person name="Nusskern D.R."/>
            <person name="Shue B.C."/>
            <person name="Zheng X.H."/>
            <person name="Zhong F."/>
            <person name="Delcher A.L."/>
            <person name="Huson D.H."/>
            <person name="Kravitz S.A."/>
            <person name="Mouchard L."/>
            <person name="Reinert K."/>
            <person name="Remington K.A."/>
            <person name="Clark A.G."/>
            <person name="Waterman M.S."/>
            <person name="Eichler E.E."/>
            <person name="Adams M.D."/>
            <person name="Hunkapiller M.W."/>
            <person name="Myers E.W."/>
            <person name="Venter J.C."/>
        </authorList>
    </citation>
    <scope>NUCLEOTIDE SEQUENCE [LARGE SCALE GENOMIC DNA]</scope>
</reference>
<reference evidence="11" key="7">
    <citation type="journal article" date="2004" name="Genome Res.">
        <title>The status, quality, and expansion of the NIH full-length cDNA project: the Mammalian Gene Collection (MGC).</title>
        <authorList>
            <consortium name="The MGC Project Team"/>
        </authorList>
    </citation>
    <scope>NUCLEOTIDE SEQUENCE [LARGE SCALE MRNA]</scope>
    <source>
        <tissue evidence="11">Lung</tissue>
    </source>
</reference>
<reference evidence="9" key="8">
    <citation type="journal article" date="2002" name="Int. J. Mol. Med.">
        <title>Interaction of the small GTPase Rac3 with NRBP, a protein with a kinase-homology domain.</title>
        <authorList>
            <person name="De Langhe S."/>
            <person name="Haataja L."/>
            <person name="Senadheera D."/>
            <person name="Groffen J."/>
            <person name="Heisterkamp N."/>
        </authorList>
    </citation>
    <scope>NUCLEOTIDE SEQUENCE [MRNA] OF 1-426</scope>
    <scope>FUNCTION</scope>
    <scope>SUBCELLULAR LOCATION</scope>
    <scope>PHOSPHORYLATION</scope>
    <scope>INTERACTION WITH RAC3</scope>
</reference>
<reference evidence="9" key="9">
    <citation type="journal article" date="2004" name="Virus Res.">
        <title>The non-structural 3 (NS3) protein of dengue virus type 2 interacts with human nuclear receptor binding protein and is associated with alterations in membrane structure.</title>
        <authorList>
            <person name="Chua J.J.E."/>
            <person name="Ng M.M.L."/>
            <person name="Chow V.T.K."/>
        </authorList>
    </citation>
    <scope>FUNCTION</scope>
    <scope>INTERACTION WITH DENGUE VIRUS TYPE 2 NS3</scope>
</reference>
<reference key="10">
    <citation type="journal article" date="2006" name="Cell">
        <title>Global, in vivo, and site-specific phosphorylation dynamics in signaling networks.</title>
        <authorList>
            <person name="Olsen J.V."/>
            <person name="Blagoev B."/>
            <person name="Gnad F."/>
            <person name="Macek B."/>
            <person name="Kumar C."/>
            <person name="Mortensen P."/>
            <person name="Mann M."/>
        </authorList>
    </citation>
    <scope>IDENTIFICATION BY MASS SPECTROMETRY [LARGE SCALE ANALYSIS]</scope>
    <source>
        <tissue>Cervix carcinoma</tissue>
    </source>
</reference>
<reference key="11">
    <citation type="journal article" date="2006" name="Nat. Biotechnol.">
        <title>A probability-based approach for high-throughput protein phosphorylation analysis and site localization.</title>
        <authorList>
            <person name="Beausoleil S.A."/>
            <person name="Villen J."/>
            <person name="Gerber S.A."/>
            <person name="Rush J."/>
            <person name="Gygi S.P."/>
        </authorList>
    </citation>
    <scope>PHOSPHORYLATION [LARGE SCALE ANALYSIS] AT THR-433</scope>
    <scope>IDENTIFICATION BY MASS SPECTROMETRY [LARGE SCALE ANALYSIS]</scope>
    <source>
        <tissue>Cervix carcinoma</tissue>
    </source>
</reference>
<reference key="12">
    <citation type="journal article" date="2008" name="J. Proteome Res.">
        <title>Phosphoproteome of resting human platelets.</title>
        <authorList>
            <person name="Zahedi R.P."/>
            <person name="Lewandrowski U."/>
            <person name="Wiesner J."/>
            <person name="Wortelkamp S."/>
            <person name="Moebius J."/>
            <person name="Schuetz C."/>
            <person name="Walter U."/>
            <person name="Gambaryan S."/>
            <person name="Sickmann A."/>
        </authorList>
    </citation>
    <scope>IDENTIFICATION BY MASS SPECTROMETRY [LARGE SCALE ANALYSIS]</scope>
    <source>
        <tissue>Platelet</tissue>
    </source>
</reference>
<reference key="13">
    <citation type="journal article" date="2008" name="Proc. Natl. Acad. Sci. U.S.A.">
        <title>A quantitative atlas of mitotic phosphorylation.</title>
        <authorList>
            <person name="Dephoure N."/>
            <person name="Zhou C."/>
            <person name="Villen J."/>
            <person name="Beausoleil S.A."/>
            <person name="Bakalarski C.E."/>
            <person name="Elledge S.J."/>
            <person name="Gygi S.P."/>
        </authorList>
    </citation>
    <scope>PHOSPHORYLATION [LARGE SCALE ANALYSIS] AT THR-433</scope>
    <scope>IDENTIFICATION BY MASS SPECTROMETRY [LARGE SCALE ANALYSIS]</scope>
    <source>
        <tissue>Cervix carcinoma</tissue>
    </source>
</reference>
<reference key="14">
    <citation type="journal article" date="2009" name="Anal. Chem.">
        <title>Lys-N and trypsin cover complementary parts of the phosphoproteome in a refined SCX-based approach.</title>
        <authorList>
            <person name="Gauci S."/>
            <person name="Helbig A.O."/>
            <person name="Slijper M."/>
            <person name="Krijgsveld J."/>
            <person name="Heck A.J."/>
            <person name="Mohammed S."/>
        </authorList>
    </citation>
    <scope>ACETYLATION [LARGE SCALE ANALYSIS] AT SER-2</scope>
    <scope>CLEAVAGE OF INITIATOR METHIONINE [LARGE SCALE ANALYSIS]</scope>
    <scope>IDENTIFICATION BY MASS SPECTROMETRY [LARGE SCALE ANALYSIS]</scope>
</reference>
<reference key="15">
    <citation type="journal article" date="2009" name="Sci. Signal.">
        <title>Quantitative phosphoproteomic analysis of T cell receptor signaling reveals system-wide modulation of protein-protein interactions.</title>
        <authorList>
            <person name="Mayya V."/>
            <person name="Lundgren D.H."/>
            <person name="Hwang S.-I."/>
            <person name="Rezaul K."/>
            <person name="Wu L."/>
            <person name="Eng J.K."/>
            <person name="Rodionov V."/>
            <person name="Han D.K."/>
        </authorList>
    </citation>
    <scope>PHOSPHORYLATION [LARGE SCALE ANALYSIS] AT THR-433</scope>
    <scope>IDENTIFICATION BY MASS SPECTROMETRY [LARGE SCALE ANALYSIS]</scope>
    <source>
        <tissue>Leukemic T-cell</tissue>
    </source>
</reference>
<reference key="16">
    <citation type="journal article" date="2010" name="Sci. Signal.">
        <title>Quantitative phosphoproteomics reveals widespread full phosphorylation site occupancy during mitosis.</title>
        <authorList>
            <person name="Olsen J.V."/>
            <person name="Vermeulen M."/>
            <person name="Santamaria A."/>
            <person name="Kumar C."/>
            <person name="Miller M.L."/>
            <person name="Jensen L.J."/>
            <person name="Gnad F."/>
            <person name="Cox J."/>
            <person name="Jensen T.S."/>
            <person name="Nigg E.A."/>
            <person name="Brunak S."/>
            <person name="Mann M."/>
        </authorList>
    </citation>
    <scope>ACETYLATION [LARGE SCALE ANALYSIS] AT SER-2</scope>
    <scope>PHOSPHORYLATION [LARGE SCALE ANALYSIS] AT SER-2</scope>
    <scope>CLEAVAGE OF INITIATOR METHIONINE [LARGE SCALE ANALYSIS]</scope>
    <scope>IDENTIFICATION BY MASS SPECTROMETRY [LARGE SCALE ANALYSIS]</scope>
    <source>
        <tissue>Cervix carcinoma</tissue>
    </source>
</reference>
<reference key="17">
    <citation type="journal article" date="2011" name="BMC Syst. Biol.">
        <title>Initial characterization of the human central proteome.</title>
        <authorList>
            <person name="Burkard T.R."/>
            <person name="Planyavsky M."/>
            <person name="Kaupe I."/>
            <person name="Breitwieser F.P."/>
            <person name="Buerckstuemmer T."/>
            <person name="Bennett K.L."/>
            <person name="Superti-Furga G."/>
            <person name="Colinge J."/>
        </authorList>
    </citation>
    <scope>IDENTIFICATION BY MASS SPECTROMETRY [LARGE SCALE ANALYSIS]</scope>
</reference>
<reference key="18">
    <citation type="journal article" date="2011" name="Sci. Signal.">
        <title>System-wide temporal characterization of the proteome and phosphoproteome of human embryonic stem cell differentiation.</title>
        <authorList>
            <person name="Rigbolt K.T."/>
            <person name="Prokhorova T.A."/>
            <person name="Akimov V."/>
            <person name="Henningsen J."/>
            <person name="Johansen P.T."/>
            <person name="Kratchmarova I."/>
            <person name="Kassem M."/>
            <person name="Mann M."/>
            <person name="Olsen J.V."/>
            <person name="Blagoev B."/>
        </authorList>
    </citation>
    <scope>ACETYLATION [LARGE SCALE ANALYSIS] AT SER-2</scope>
    <scope>PHOSPHORYLATION [LARGE SCALE ANALYSIS] AT SER-2</scope>
    <scope>CLEAVAGE OF INITIATOR METHIONINE [LARGE SCALE ANALYSIS]</scope>
    <scope>IDENTIFICATION BY MASS SPECTROMETRY [LARGE SCALE ANALYSIS]</scope>
</reference>
<reference key="19">
    <citation type="journal article" date="2012" name="EMBO J.">
        <title>Nuclear receptor binding protein 1 regulates intestinal progenitor cell homeostasis and tumour formation.</title>
        <authorList>
            <person name="Wilson C.H."/>
            <person name="Crombie C."/>
            <person name="van der Weyden L."/>
            <person name="Poulogiannis G."/>
            <person name="Rust A.G."/>
            <person name="Pardo M."/>
            <person name="Gracia T."/>
            <person name="Yu L."/>
            <person name="Choudhary J."/>
            <person name="Poulin G.B."/>
            <person name="McIntyre R.E."/>
            <person name="Winton D.J."/>
            <person name="March H.N."/>
            <person name="Arends M.J."/>
            <person name="Fraser A.G."/>
            <person name="Adams D.J."/>
        </authorList>
    </citation>
    <scope>INTERACTION WITH ELOB; ELOC; TSC22D2; TSC22D4 AND SALL4</scope>
</reference>
<reference key="20">
    <citation type="journal article" date="2012" name="Mol. Cell. Proteomics">
        <title>Comparative large-scale characterisation of plant vs. mammal proteins reveals similar and idiosyncratic N-alpha acetylation features.</title>
        <authorList>
            <person name="Bienvenut W.V."/>
            <person name="Sumpton D."/>
            <person name="Martinez A."/>
            <person name="Lilla S."/>
            <person name="Espagne C."/>
            <person name="Meinnel T."/>
            <person name="Giglione C."/>
        </authorList>
    </citation>
    <scope>ACETYLATION [LARGE SCALE ANALYSIS] AT SER-2</scope>
    <scope>CLEAVAGE OF INITIATOR METHIONINE [LARGE SCALE ANALYSIS]</scope>
    <scope>IDENTIFICATION BY MASS SPECTROMETRY [LARGE SCALE ANALYSIS]</scope>
</reference>
<reference key="21">
    <citation type="journal article" date="2013" name="J. Proteome Res.">
        <title>Toward a comprehensive characterization of a human cancer cell phosphoproteome.</title>
        <authorList>
            <person name="Zhou H."/>
            <person name="Di Palma S."/>
            <person name="Preisinger C."/>
            <person name="Peng M."/>
            <person name="Polat A.N."/>
            <person name="Heck A.J."/>
            <person name="Mohammed S."/>
        </authorList>
    </citation>
    <scope>PHOSPHORYLATION [LARGE SCALE ANALYSIS] AT SER-2 AND THR-433</scope>
    <scope>IDENTIFICATION BY MASS SPECTROMETRY [LARGE SCALE ANALYSIS]</scope>
    <source>
        <tissue>Cervix carcinoma</tissue>
        <tissue>Erythroleukemia</tissue>
    </source>
</reference>
<reference key="22">
    <citation type="journal article" date="2007" name="Nature">
        <title>Patterns of somatic mutation in human cancer genomes.</title>
        <authorList>
            <person name="Greenman C."/>
            <person name="Stephens P."/>
            <person name="Smith R."/>
            <person name="Dalgliesh G.L."/>
            <person name="Hunter C."/>
            <person name="Bignell G."/>
            <person name="Davies H."/>
            <person name="Teague J."/>
            <person name="Butler A."/>
            <person name="Stevens C."/>
            <person name="Edkins S."/>
            <person name="O'Meara S."/>
            <person name="Vastrik I."/>
            <person name="Schmidt E.E."/>
            <person name="Avis T."/>
            <person name="Barthorpe S."/>
            <person name="Bhamra G."/>
            <person name="Buck G."/>
            <person name="Choudhury B."/>
            <person name="Clements J."/>
            <person name="Cole J."/>
            <person name="Dicks E."/>
            <person name="Forbes S."/>
            <person name="Gray K."/>
            <person name="Halliday K."/>
            <person name="Harrison R."/>
            <person name="Hills K."/>
            <person name="Hinton J."/>
            <person name="Jenkinson A."/>
            <person name="Jones D."/>
            <person name="Menzies A."/>
            <person name="Mironenko T."/>
            <person name="Perry J."/>
            <person name="Raine K."/>
            <person name="Richardson D."/>
            <person name="Shepherd R."/>
            <person name="Small A."/>
            <person name="Tofts C."/>
            <person name="Varian J."/>
            <person name="Webb T."/>
            <person name="West S."/>
            <person name="Widaa S."/>
            <person name="Yates A."/>
            <person name="Cahill D.P."/>
            <person name="Louis D.N."/>
            <person name="Goldstraw P."/>
            <person name="Nicholson A.G."/>
            <person name="Brasseur F."/>
            <person name="Looijenga L."/>
            <person name="Weber B.L."/>
            <person name="Chiew Y.-E."/>
            <person name="DeFazio A."/>
            <person name="Greaves M.F."/>
            <person name="Green A.R."/>
            <person name="Campbell P."/>
            <person name="Birney E."/>
            <person name="Easton D.F."/>
            <person name="Chenevix-Trench G."/>
            <person name="Tan M.-H."/>
            <person name="Khoo S.K."/>
            <person name="Teh B.T."/>
            <person name="Yuen S.T."/>
            <person name="Leung S.Y."/>
            <person name="Wooster R."/>
            <person name="Futreal P.A."/>
            <person name="Stratton M.R."/>
        </authorList>
    </citation>
    <scope>VARIANTS [LARGE SCALE ANALYSIS] ILE-365; LEU-432 AND ARG-460</scope>
</reference>
<organism>
    <name type="scientific">Homo sapiens</name>
    <name type="common">Human</name>
    <dbReference type="NCBI Taxonomy" id="9606"/>
    <lineage>
        <taxon>Eukaryota</taxon>
        <taxon>Metazoa</taxon>
        <taxon>Chordata</taxon>
        <taxon>Craniata</taxon>
        <taxon>Vertebrata</taxon>
        <taxon>Euteleostomi</taxon>
        <taxon>Mammalia</taxon>
        <taxon>Eutheria</taxon>
        <taxon>Euarchontoglires</taxon>
        <taxon>Primates</taxon>
        <taxon>Haplorrhini</taxon>
        <taxon>Catarrhini</taxon>
        <taxon>Hominidae</taxon>
        <taxon>Homo</taxon>
    </lineage>
</organism>
<dbReference type="EMBL" id="AF113249">
    <property type="protein sequence ID" value="AAF21967.1"/>
    <property type="molecule type" value="mRNA"/>
</dbReference>
<dbReference type="EMBL" id="AK001946">
    <property type="protein sequence ID" value="BAA91993.1"/>
    <property type="molecule type" value="mRNA"/>
</dbReference>
<dbReference type="EMBL" id="AK027538">
    <property type="protein sequence ID" value="BAB55185.1"/>
    <property type="molecule type" value="mRNA"/>
</dbReference>
<dbReference type="EMBL" id="AK122664">
    <property type="protein sequence ID" value="BAG53652.1"/>
    <property type="molecule type" value="mRNA"/>
</dbReference>
<dbReference type="EMBL" id="AL136682">
    <property type="protein sequence ID" value="CAB66617.1"/>
    <property type="molecule type" value="mRNA"/>
</dbReference>
<dbReference type="EMBL" id="AK223136">
    <property type="protein sequence ID" value="BAD96856.1"/>
    <property type="molecule type" value="mRNA"/>
</dbReference>
<dbReference type="EMBL" id="AC074117">
    <property type="protein sequence ID" value="AAY14847.1"/>
    <property type="molecule type" value="Genomic_DNA"/>
</dbReference>
<dbReference type="EMBL" id="CH471053">
    <property type="protein sequence ID" value="EAX00578.1"/>
    <property type="molecule type" value="Genomic_DNA"/>
</dbReference>
<dbReference type="EMBL" id="CH471053">
    <property type="protein sequence ID" value="EAX00579.1"/>
    <property type="molecule type" value="Genomic_DNA"/>
</dbReference>
<dbReference type="EMBL" id="CH471053">
    <property type="protein sequence ID" value="EAX00580.1"/>
    <property type="molecule type" value="Genomic_DNA"/>
</dbReference>
<dbReference type="EMBL" id="BC001221">
    <property type="protein sequence ID" value="AAH01221.1"/>
    <property type="molecule type" value="mRNA"/>
</dbReference>
<dbReference type="CCDS" id="CCDS1753.1"/>
<dbReference type="RefSeq" id="NP_001308286.1">
    <property type="nucleotide sequence ID" value="NM_001321357.2"/>
</dbReference>
<dbReference type="RefSeq" id="NP_001308287.1">
    <property type="nucleotide sequence ID" value="NM_001321358.1"/>
</dbReference>
<dbReference type="RefSeq" id="NP_001308288.1">
    <property type="nucleotide sequence ID" value="NM_001321359.1"/>
</dbReference>
<dbReference type="RefSeq" id="NP_001308290.1">
    <property type="nucleotide sequence ID" value="NM_001321361.1"/>
</dbReference>
<dbReference type="RefSeq" id="NP_001308291.1">
    <property type="nucleotide sequence ID" value="NM_001321362.1"/>
</dbReference>
<dbReference type="RefSeq" id="NP_001308292.1">
    <property type="nucleotide sequence ID" value="NM_001321363.1"/>
</dbReference>
<dbReference type="RefSeq" id="NP_037524.1">
    <property type="nucleotide sequence ID" value="NM_013392.4"/>
</dbReference>
<dbReference type="RefSeq" id="XP_047299992.1">
    <property type="nucleotide sequence ID" value="XM_047444036.1"/>
</dbReference>
<dbReference type="RefSeq" id="XP_054197542.1">
    <property type="nucleotide sequence ID" value="XM_054341567.1"/>
</dbReference>
<dbReference type="SMR" id="Q9UHY1"/>
<dbReference type="BioGRID" id="118995">
    <property type="interactions" value="146"/>
</dbReference>
<dbReference type="FunCoup" id="Q9UHY1">
    <property type="interactions" value="4024"/>
</dbReference>
<dbReference type="IntAct" id="Q9UHY1">
    <property type="interactions" value="87"/>
</dbReference>
<dbReference type="MINT" id="Q9UHY1"/>
<dbReference type="STRING" id="9606.ENSP00000369192"/>
<dbReference type="GlyCosmos" id="Q9UHY1">
    <property type="glycosylation" value="4 sites, 1 glycan"/>
</dbReference>
<dbReference type="GlyGen" id="Q9UHY1">
    <property type="glycosylation" value="4 sites, 1 O-linked glycan (4 sites)"/>
</dbReference>
<dbReference type="iPTMnet" id="Q9UHY1"/>
<dbReference type="PhosphoSitePlus" id="Q9UHY1"/>
<dbReference type="BioMuta" id="NRBP1"/>
<dbReference type="DMDM" id="74761962"/>
<dbReference type="jPOST" id="Q9UHY1"/>
<dbReference type="MassIVE" id="Q9UHY1"/>
<dbReference type="PaxDb" id="9606-ENSP00000233557"/>
<dbReference type="PeptideAtlas" id="Q9UHY1"/>
<dbReference type="ProteomicsDB" id="84439"/>
<dbReference type="Pumba" id="Q9UHY1"/>
<dbReference type="Antibodypedia" id="28488">
    <property type="antibodies" value="413 antibodies from 29 providers"/>
</dbReference>
<dbReference type="DNASU" id="29959"/>
<dbReference type="Ensembl" id="ENST00000233557.7">
    <property type="protein sequence ID" value="ENSP00000233557.3"/>
    <property type="gene ID" value="ENSG00000115216.14"/>
</dbReference>
<dbReference type="Ensembl" id="ENST00000379852.8">
    <property type="protein sequence ID" value="ENSP00000369181.3"/>
    <property type="gene ID" value="ENSG00000115216.14"/>
</dbReference>
<dbReference type="GeneID" id="29959"/>
<dbReference type="KEGG" id="hsa:29959"/>
<dbReference type="MANE-Select" id="ENST00000379852.8">
    <property type="protein sequence ID" value="ENSP00000369181.3"/>
    <property type="RefSeq nucleotide sequence ID" value="NM_013392.4"/>
    <property type="RefSeq protein sequence ID" value="NP_037524.1"/>
</dbReference>
<dbReference type="UCSC" id="uc002rko.4">
    <property type="organism name" value="human"/>
</dbReference>
<dbReference type="AGR" id="HGNC:7993"/>
<dbReference type="CTD" id="29959"/>
<dbReference type="DisGeNET" id="29959"/>
<dbReference type="GeneCards" id="NRBP1"/>
<dbReference type="HGNC" id="HGNC:7993">
    <property type="gene designation" value="NRBP1"/>
</dbReference>
<dbReference type="HPA" id="ENSG00000115216">
    <property type="expression patterns" value="Low tissue specificity"/>
</dbReference>
<dbReference type="MIM" id="606010">
    <property type="type" value="gene"/>
</dbReference>
<dbReference type="neXtProt" id="NX_Q9UHY1"/>
<dbReference type="OpenTargets" id="ENSG00000115216"/>
<dbReference type="PharmGKB" id="PA31772"/>
<dbReference type="VEuPathDB" id="HostDB:ENSG00000115216"/>
<dbReference type="eggNOG" id="KOG1266">
    <property type="taxonomic scope" value="Eukaryota"/>
</dbReference>
<dbReference type="GeneTree" id="ENSGT00940000155605"/>
<dbReference type="HOGENOM" id="CLU_024273_0_0_1"/>
<dbReference type="InParanoid" id="Q9UHY1"/>
<dbReference type="OrthoDB" id="1034557at2759"/>
<dbReference type="PAN-GO" id="Q9UHY1">
    <property type="GO annotations" value="4 GO annotations based on evolutionary models"/>
</dbReference>
<dbReference type="PhylomeDB" id="Q9UHY1"/>
<dbReference type="TreeFam" id="TF315519"/>
<dbReference type="PathwayCommons" id="Q9UHY1"/>
<dbReference type="Reactome" id="R-HSA-383280">
    <property type="pathway name" value="Nuclear Receptor transcription pathway"/>
</dbReference>
<dbReference type="SignaLink" id="Q9UHY1"/>
<dbReference type="BioGRID-ORCS" id="29959">
    <property type="hits" value="680 hits in 1222 CRISPR screens"/>
</dbReference>
<dbReference type="ChiTaRS" id="NRBP1">
    <property type="organism name" value="human"/>
</dbReference>
<dbReference type="GeneWiki" id="NRBP1"/>
<dbReference type="GenomeRNAi" id="29959"/>
<dbReference type="Pharos" id="Q9UHY1">
    <property type="development level" value="Tbio"/>
</dbReference>
<dbReference type="PRO" id="PR:Q9UHY1"/>
<dbReference type="Proteomes" id="UP000005640">
    <property type="component" value="Chromosome 2"/>
</dbReference>
<dbReference type="RNAct" id="Q9UHY1">
    <property type="molecule type" value="protein"/>
</dbReference>
<dbReference type="Bgee" id="ENSG00000115216">
    <property type="expression patterns" value="Expressed in lower esophagus mucosa and 197 other cell types or tissues"/>
</dbReference>
<dbReference type="ExpressionAtlas" id="Q9UHY1">
    <property type="expression patterns" value="baseline and differential"/>
</dbReference>
<dbReference type="GO" id="GO:0005938">
    <property type="term" value="C:cell cortex"/>
    <property type="evidence" value="ECO:0007669"/>
    <property type="project" value="UniProtKB-SubCell"/>
</dbReference>
<dbReference type="GO" id="GO:0005737">
    <property type="term" value="C:cytoplasm"/>
    <property type="evidence" value="ECO:0000318"/>
    <property type="project" value="GO_Central"/>
</dbReference>
<dbReference type="GO" id="GO:0012505">
    <property type="term" value="C:endomembrane system"/>
    <property type="evidence" value="ECO:0000314"/>
    <property type="project" value="UniProtKB"/>
</dbReference>
<dbReference type="GO" id="GO:0030027">
    <property type="term" value="C:lamellipodium"/>
    <property type="evidence" value="ECO:0007669"/>
    <property type="project" value="UniProtKB-SubCell"/>
</dbReference>
<dbReference type="GO" id="GO:0016020">
    <property type="term" value="C:membrane"/>
    <property type="evidence" value="ECO:0007669"/>
    <property type="project" value="UniProtKB-KW"/>
</dbReference>
<dbReference type="GO" id="GO:0005654">
    <property type="term" value="C:nucleoplasm"/>
    <property type="evidence" value="ECO:0000304"/>
    <property type="project" value="Reactome"/>
</dbReference>
<dbReference type="GO" id="GO:0005524">
    <property type="term" value="F:ATP binding"/>
    <property type="evidence" value="ECO:0007669"/>
    <property type="project" value="InterPro"/>
</dbReference>
<dbReference type="GO" id="GO:0042803">
    <property type="term" value="F:protein homodimerization activity"/>
    <property type="evidence" value="ECO:0000250"/>
    <property type="project" value="UniProtKB"/>
</dbReference>
<dbReference type="GO" id="GO:0004674">
    <property type="term" value="F:protein serine/threonine kinase activity"/>
    <property type="evidence" value="ECO:0000318"/>
    <property type="project" value="GO_Central"/>
</dbReference>
<dbReference type="GO" id="GO:0006974">
    <property type="term" value="P:DNA damage response"/>
    <property type="evidence" value="ECO:0000318"/>
    <property type="project" value="GO_Central"/>
</dbReference>
<dbReference type="GO" id="GO:0006888">
    <property type="term" value="P:endoplasmic reticulum to Golgi vesicle-mediated transport"/>
    <property type="evidence" value="ECO:0000314"/>
    <property type="project" value="UniProtKB"/>
</dbReference>
<dbReference type="CDD" id="cd14034">
    <property type="entry name" value="PK_NRBP1"/>
    <property type="match status" value="1"/>
</dbReference>
<dbReference type="FunFam" id="1.10.510.10:FF:000181">
    <property type="entry name" value="Nuclear receptor-binding protein 1"/>
    <property type="match status" value="1"/>
</dbReference>
<dbReference type="FunFam" id="3.30.200.20:FF:000098">
    <property type="entry name" value="Nuclear receptor-binding protein 1"/>
    <property type="match status" value="1"/>
</dbReference>
<dbReference type="Gene3D" id="3.30.200.20">
    <property type="entry name" value="Phosphorylase Kinase, domain 1"/>
    <property type="match status" value="1"/>
</dbReference>
<dbReference type="Gene3D" id="1.10.510.10">
    <property type="entry name" value="Transferase(Phosphotransferase) domain 1"/>
    <property type="match status" value="1"/>
</dbReference>
<dbReference type="InterPro" id="IPR011009">
    <property type="entry name" value="Kinase-like_dom_sf"/>
</dbReference>
<dbReference type="InterPro" id="IPR000719">
    <property type="entry name" value="Prot_kinase_dom"/>
</dbReference>
<dbReference type="InterPro" id="IPR050588">
    <property type="entry name" value="WNK_Ser-Thr_kinase"/>
</dbReference>
<dbReference type="PANTHER" id="PTHR13902">
    <property type="entry name" value="SERINE/THREONINE-PROTEIN KINASE WNK WITH NO LYSINE -RELATED"/>
    <property type="match status" value="1"/>
</dbReference>
<dbReference type="Pfam" id="PF00069">
    <property type="entry name" value="Pkinase"/>
    <property type="match status" value="1"/>
</dbReference>
<dbReference type="SUPFAM" id="SSF56112">
    <property type="entry name" value="Protein kinase-like (PK-like)"/>
    <property type="match status" value="1"/>
</dbReference>
<dbReference type="PROSITE" id="PS50011">
    <property type="entry name" value="PROTEIN_KINASE_DOM"/>
    <property type="match status" value="1"/>
</dbReference>
<protein>
    <recommendedName>
        <fullName>Nuclear receptor-binding protein</fullName>
    </recommendedName>
</protein>
<comment type="function">
    <text evidence="1 5 6">Required for embryonic development (By similarity). Plays a role in intestinal epithelial cell fate and proliferation, thereby involved in the architectural development of the intestine potentially via the regulation of Wnt-responsive genes (By similarity). May play a role in subcellular trafficking between the endoplasmic reticulum and Golgi apparatus through interactions with the Rho-type GTPases (PubMed:11956649). Binding to the NS3 protein of dengue virus type 2 appears to subvert this activity into the alteration of the intracellular membrane structure associated with flaviviral replication (PubMed:15084397).</text>
</comment>
<comment type="subunit">
    <text evidence="1 8">Homodimer (By similarity). Binds to MLF1, recruiting a serine kinase which phosphorylates both itself and MLF1 (By similarity). Phosphorylated MLF1 binds to YWHAZ and is retained in the cytoplasm (By similarity). Interacts with ELOC/TCEB1, ELOB/TCEB2, TSC22D2 and TSC22D4 (PubMed:22510880). Interacts with the Elongin BC E3 ubiquitin ligase complex via its interaction with ELOB/TCEB2 and ELOC/TCEB1 (PubMed:22510880). Interacts with SALL4 (PubMed:22510880).</text>
</comment>
<comment type="interaction">
    <interactant intactId="EBI-749731">
        <id>Q9UHY1</id>
    </interactant>
    <interactant intactId="EBI-10290932">
        <id>Q96LR7</id>
        <label>C2orf50</label>
    </interactant>
    <organismsDiffer>false</organismsDiffer>
    <experiments>3</experiments>
</comment>
<comment type="interaction">
    <interactant intactId="EBI-749731">
        <id>Q9UHY1</id>
    </interactant>
    <interactant intactId="EBI-767084">
        <id>P60763</id>
        <label>RAC3</label>
    </interactant>
    <organismsDiffer>false</organismsDiffer>
    <experiments>3</experiments>
</comment>
<comment type="interaction">
    <interactant intactId="EBI-749731">
        <id>Q9UHY1</id>
    </interactant>
    <interactant intactId="EBI-11745060">
        <id>Q8N9S9-2</id>
        <label>SNX31</label>
    </interactant>
    <organismsDiffer>false</organismsDiffer>
    <experiments>3</experiments>
</comment>
<comment type="interaction">
    <interactant intactId="EBI-749731">
        <id>Q9UHY1</id>
    </interactant>
    <interactant intactId="EBI-741237">
        <id>O60504</id>
        <label>SORBS3</label>
    </interactant>
    <organismsDiffer>false</organismsDiffer>
    <experiments>3</experiments>
</comment>
<comment type="interaction">
    <interactant intactId="EBI-749731">
        <id>Q9UHY1</id>
    </interactant>
    <interactant intactId="EBI-10261521">
        <id>Q8IV54</id>
        <label>TSC22D4</label>
    </interactant>
    <organismsDiffer>false</organismsDiffer>
    <experiments>5</experiments>
</comment>
<comment type="interaction">
    <interactant intactId="EBI-749731">
        <id>Q9UHY1</id>
    </interactant>
    <interactant intactId="EBI-739485">
        <id>Q9Y3Q8</id>
        <label>TSC22D4</label>
    </interactant>
    <organismsDiffer>false</organismsDiffer>
    <experiments>11</experiments>
</comment>
<comment type="interaction">
    <interactant intactId="EBI-749731">
        <id>Q9UHY1</id>
    </interactant>
    <interactant intactId="EBI-2312582">
        <id>Q8BX22</id>
        <label>Sall4</label>
    </interactant>
    <organismsDiffer>true</organismsDiffer>
    <experiments>2</experiments>
</comment>
<comment type="interaction">
    <interactant intactId="EBI-749731">
        <id>Q9UHY1</id>
    </interactant>
    <interactant intactId="EBI-465733">
        <id>P14340</id>
    </interactant>
    <organismsDiffer>true</organismsDiffer>
    <experiments>4</experiments>
</comment>
<comment type="subcellular location">
    <subcellularLocation>
        <location evidence="5">Cytoplasm</location>
        <location evidence="5">Cell cortex</location>
    </subcellularLocation>
    <subcellularLocation>
        <location evidence="5">Endomembrane system</location>
    </subcellularLocation>
    <subcellularLocation>
        <location evidence="5">Cell projection</location>
        <location evidence="5">Lamellipodium</location>
    </subcellularLocation>
    <text>Colocalizes with activated RAC3 to endomembranes and at the cell periphery in lamellipodia.</text>
</comment>
<comment type="tissue specificity">
    <text evidence="4">Ubiquitously expressed in all tissues examined with high levels in the testis.</text>
</comment>
<comment type="domain">
    <text evidence="2">The protein kinase domain is predicted to be catalytically inactive.</text>
</comment>
<comment type="miscellaneous">
    <text evidence="8">May act as a tumor suppressor to decrease tumor incidence and improve survival (PubMed:22510880). Expression levels have also been found to be reduced in a range of tumor types, such as leukemia, lymphoma, colorectal, breast, brain, esophageal, renal cell, prostate and lung (PubMed:22510880).</text>
</comment>
<comment type="similarity">
    <text evidence="2">Belongs to the protein kinase superfamily. Ser/Thr protein kinase family.</text>
</comment>
<comment type="caution">
    <text evidence="9">Author states that kinase activity observed in PubMed:11956649 may be due to sample contamination. This protein is predicted to be catalytically inactive.</text>
</comment>
<feature type="initiator methionine" description="Removed" evidence="19 21 22 23">
    <location>
        <position position="1"/>
    </location>
</feature>
<feature type="chain" id="PRO_0000086449" description="Nuclear receptor-binding protein">
    <location>
        <begin position="2"/>
        <end position="535"/>
    </location>
</feature>
<feature type="domain" description="Protein kinase" evidence="2">
    <location>
        <begin position="68"/>
        <end position="327"/>
    </location>
</feature>
<feature type="region of interest" description="Disordered" evidence="3">
    <location>
        <begin position="1"/>
        <end position="70"/>
    </location>
</feature>
<feature type="region of interest" description="Disordered" evidence="3">
    <location>
        <begin position="409"/>
        <end position="437"/>
    </location>
</feature>
<feature type="compositionally biased region" description="Polar residues" evidence="3">
    <location>
        <begin position="1"/>
        <end position="26"/>
    </location>
</feature>
<feature type="compositionally biased region" description="Low complexity" evidence="3">
    <location>
        <begin position="27"/>
        <end position="42"/>
    </location>
</feature>
<feature type="compositionally biased region" description="Acidic residues" evidence="3">
    <location>
        <begin position="43"/>
        <end position="57"/>
    </location>
</feature>
<feature type="compositionally biased region" description="Low complexity" evidence="3">
    <location>
        <begin position="414"/>
        <end position="432"/>
    </location>
</feature>
<feature type="modified residue" description="N-acetylserine" evidence="19 21 22 23">
    <location>
        <position position="2"/>
    </location>
</feature>
<feature type="modified residue" description="Phosphoserine" evidence="21 22 24">
    <location>
        <position position="2"/>
    </location>
</feature>
<feature type="modified residue" description="Phosphothreonine" evidence="1">
    <location>
        <position position="431"/>
    </location>
</feature>
<feature type="modified residue" description="Phosphothreonine" evidence="17 18 20 24">
    <location>
        <position position="433"/>
    </location>
</feature>
<feature type="sequence variant" id="VAR_041359" description="In dbSNP:rs56004639." evidence="7">
    <original>V</original>
    <variation>I</variation>
    <location>
        <position position="365"/>
    </location>
</feature>
<feature type="sequence variant" id="VAR_041360" description="In an ovarian mucinous carcinoma sample; somatic mutation; dbSNP:rs753734841." evidence="7">
    <original>P</original>
    <variation>L</variation>
    <location>
        <position position="432"/>
    </location>
</feature>
<feature type="sequence variant" id="VAR_041361" description="In dbSNP:rs34260196." evidence="7">
    <original>H</original>
    <variation>R</variation>
    <location>
        <position position="460"/>
    </location>
</feature>
<feature type="sequence conflict" description="In Ref. 4; BAD96856." evidence="9" ref="4">
    <original>R</original>
    <variation>G</variation>
    <location>
        <position position="63"/>
    </location>
</feature>
<feature type="sequence conflict" description="In Ref. 2; BAB55185." evidence="9" ref="2">
    <original>V</original>
    <variation>M</variation>
    <location>
        <position position="95"/>
    </location>
</feature>
<feature type="sequence conflict" description="In Ref. 2; BAB55185." evidence="9" ref="2">
    <original>N</original>
    <variation>S</variation>
    <location>
        <position position="473"/>
    </location>
</feature>
<evidence type="ECO:0000250" key="1">
    <source>
        <dbReference type="UniProtKB" id="Q99J45"/>
    </source>
</evidence>
<evidence type="ECO:0000255" key="2">
    <source>
        <dbReference type="PROSITE-ProRule" id="PRU00159"/>
    </source>
</evidence>
<evidence type="ECO:0000256" key="3">
    <source>
        <dbReference type="SAM" id="MobiDB-lite"/>
    </source>
</evidence>
<evidence type="ECO:0000269" key="4">
    <source>
    </source>
</evidence>
<evidence type="ECO:0000269" key="5">
    <source>
    </source>
</evidence>
<evidence type="ECO:0000269" key="6">
    <source>
    </source>
</evidence>
<evidence type="ECO:0000269" key="7">
    <source>
    </source>
</evidence>
<evidence type="ECO:0000269" key="8">
    <source>
    </source>
</evidence>
<evidence type="ECO:0000305" key="9"/>
<evidence type="ECO:0000312" key="10">
    <source>
        <dbReference type="EMBL" id="AAF21967.1"/>
    </source>
</evidence>
<evidence type="ECO:0000312" key="11">
    <source>
        <dbReference type="EMBL" id="AAH01221.1"/>
    </source>
</evidence>
<evidence type="ECO:0000312" key="12">
    <source>
        <dbReference type="EMBL" id="AAY14847.1"/>
    </source>
</evidence>
<evidence type="ECO:0000312" key="13">
    <source>
        <dbReference type="EMBL" id="BAA91993.1"/>
    </source>
</evidence>
<evidence type="ECO:0000312" key="14">
    <source>
        <dbReference type="EMBL" id="BAB55185.1"/>
    </source>
</evidence>
<evidence type="ECO:0000312" key="15">
    <source>
        <dbReference type="EMBL" id="BAD96856.1"/>
    </source>
</evidence>
<evidence type="ECO:0000312" key="16">
    <source>
        <dbReference type="EMBL" id="CAB66617.1"/>
    </source>
</evidence>
<evidence type="ECO:0007744" key="17">
    <source>
    </source>
</evidence>
<evidence type="ECO:0007744" key="18">
    <source>
    </source>
</evidence>
<evidence type="ECO:0007744" key="19">
    <source>
    </source>
</evidence>
<evidence type="ECO:0007744" key="20">
    <source>
    </source>
</evidence>
<evidence type="ECO:0007744" key="21">
    <source>
    </source>
</evidence>
<evidence type="ECO:0007744" key="22">
    <source>
    </source>
</evidence>
<evidence type="ECO:0007744" key="23">
    <source>
    </source>
</evidence>
<evidence type="ECO:0007744" key="24">
    <source>
    </source>
</evidence>